<proteinExistence type="inferred from homology"/>
<dbReference type="EMBL" id="CP001396">
    <property type="protein sequence ID" value="ACR64339.1"/>
    <property type="molecule type" value="Genomic_DNA"/>
</dbReference>
<dbReference type="RefSeq" id="WP_001091499.1">
    <property type="nucleotide sequence ID" value="NC_012759.1"/>
</dbReference>
<dbReference type="SMR" id="C4ZPW8"/>
<dbReference type="KEGG" id="ebw:BWG_0040"/>
<dbReference type="HOGENOM" id="CLU_034178_0_1_6"/>
<dbReference type="UniPathway" id="UPA00117"/>
<dbReference type="GO" id="GO:0009055">
    <property type="term" value="F:electron transfer activity"/>
    <property type="evidence" value="ECO:0007669"/>
    <property type="project" value="InterPro"/>
</dbReference>
<dbReference type="GO" id="GO:0050660">
    <property type="term" value="F:flavin adenine dinucleotide binding"/>
    <property type="evidence" value="ECO:0007669"/>
    <property type="project" value="InterPro"/>
</dbReference>
<dbReference type="GO" id="GO:0009437">
    <property type="term" value="P:carnitine metabolic process"/>
    <property type="evidence" value="ECO:0007669"/>
    <property type="project" value="UniProtKB-UniRule"/>
</dbReference>
<dbReference type="GO" id="GO:0033539">
    <property type="term" value="P:fatty acid beta-oxidation using acyl-CoA dehydrogenase"/>
    <property type="evidence" value="ECO:0007669"/>
    <property type="project" value="TreeGrafter"/>
</dbReference>
<dbReference type="FunFam" id="3.40.50.1220:FF:000004">
    <property type="entry name" value="Electron transfer flavoprotein"/>
    <property type="match status" value="1"/>
</dbReference>
<dbReference type="FunFam" id="3.40.50.620:FF:000067">
    <property type="entry name" value="Protein FixB"/>
    <property type="match status" value="1"/>
</dbReference>
<dbReference type="Gene3D" id="3.40.50.620">
    <property type="entry name" value="HUPs"/>
    <property type="match status" value="1"/>
</dbReference>
<dbReference type="Gene3D" id="3.40.50.1220">
    <property type="entry name" value="TPP-binding domain"/>
    <property type="match status" value="1"/>
</dbReference>
<dbReference type="HAMAP" id="MF_01056">
    <property type="entry name" value="FixB"/>
    <property type="match status" value="1"/>
</dbReference>
<dbReference type="InterPro" id="IPR029035">
    <property type="entry name" value="DHS-like_NAD/FAD-binding_dom"/>
</dbReference>
<dbReference type="InterPro" id="IPR014730">
    <property type="entry name" value="ETF_a/b_N"/>
</dbReference>
<dbReference type="InterPro" id="IPR001308">
    <property type="entry name" value="ETF_a/FixB"/>
</dbReference>
<dbReference type="InterPro" id="IPR014731">
    <property type="entry name" value="ETF_asu_C"/>
</dbReference>
<dbReference type="InterPro" id="IPR018206">
    <property type="entry name" value="ETF_asu_C_CS"/>
</dbReference>
<dbReference type="InterPro" id="IPR023461">
    <property type="entry name" value="FixB"/>
</dbReference>
<dbReference type="InterPro" id="IPR014729">
    <property type="entry name" value="Rossmann-like_a/b/a_fold"/>
</dbReference>
<dbReference type="NCBIfam" id="NF002889">
    <property type="entry name" value="PRK03363.1"/>
    <property type="match status" value="1"/>
</dbReference>
<dbReference type="PANTHER" id="PTHR43153">
    <property type="entry name" value="ELECTRON TRANSFER FLAVOPROTEIN ALPHA"/>
    <property type="match status" value="1"/>
</dbReference>
<dbReference type="PANTHER" id="PTHR43153:SF5">
    <property type="entry name" value="PROTEIN FIXB-RELATED"/>
    <property type="match status" value="1"/>
</dbReference>
<dbReference type="Pfam" id="PF01012">
    <property type="entry name" value="ETF"/>
    <property type="match status" value="1"/>
</dbReference>
<dbReference type="Pfam" id="PF00766">
    <property type="entry name" value="ETF_alpha"/>
    <property type="match status" value="1"/>
</dbReference>
<dbReference type="PIRSF" id="PIRSF000089">
    <property type="entry name" value="Electra_flavoP_a"/>
    <property type="match status" value="1"/>
</dbReference>
<dbReference type="SMART" id="SM00893">
    <property type="entry name" value="ETF"/>
    <property type="match status" value="1"/>
</dbReference>
<dbReference type="SUPFAM" id="SSF52402">
    <property type="entry name" value="Adenine nucleotide alpha hydrolases-like"/>
    <property type="match status" value="1"/>
</dbReference>
<dbReference type="SUPFAM" id="SSF52467">
    <property type="entry name" value="DHS-like NAD/FAD-binding domain"/>
    <property type="match status" value="1"/>
</dbReference>
<dbReference type="PROSITE" id="PS00696">
    <property type="entry name" value="ETF_ALPHA"/>
    <property type="match status" value="1"/>
</dbReference>
<keyword id="KW-0249">Electron transport</keyword>
<keyword id="KW-0274">FAD</keyword>
<keyword id="KW-0285">Flavoprotein</keyword>
<keyword id="KW-0813">Transport</keyword>
<protein>
    <recommendedName>
        <fullName evidence="1">Protein FixB</fullName>
    </recommendedName>
</protein>
<gene>
    <name evidence="1" type="primary">fixB</name>
    <name type="ordered locus">BWG_0040</name>
</gene>
<comment type="function">
    <text evidence="1">Required for anaerobic carnitine reduction. May bring reductant to CaiA.</text>
</comment>
<comment type="pathway">
    <text evidence="1">Amine and polyamine metabolism; carnitine metabolism.</text>
</comment>
<comment type="subunit">
    <text evidence="1">Heterodimer of FixA and FixB.</text>
</comment>
<comment type="similarity">
    <text evidence="1">Belongs to the ETF alpha-subunit/FixB family.</text>
</comment>
<sequence>MNTFSQVWVFSDTPSRLPELMNGAQALANQINTFVLNDADGAQAIQLGANHVWKLNGKPDDRMIEDYAGVMADTIRQHGADGLVLLPNTRRGKLLAAKLGYRLKAAVSNDASTVSVQDGKATVKHMVYGGLAIGEERIATPYAVLTISSGTFDAAQPDASRTGETHTVEWQAPAVAITRTATQARQSNSVDLDKARLVVSVGRGIGSKENIALAEQLCKAIGAELACSRPVAENEKWMEHERYVGISNLMLKPELYLAVGISGQIQHMVGANASQTIFAINKDKNAPIFQYADYGIVGDAVKILPALTAALAR</sequence>
<accession>C4ZPW8</accession>
<reference key="1">
    <citation type="journal article" date="2009" name="J. Bacteriol.">
        <title>Genomic sequencing reveals regulatory mutations and recombinational events in the widely used MC4100 lineage of Escherichia coli K-12.</title>
        <authorList>
            <person name="Ferenci T."/>
            <person name="Zhou Z."/>
            <person name="Betteridge T."/>
            <person name="Ren Y."/>
            <person name="Liu Y."/>
            <person name="Feng L."/>
            <person name="Reeves P.R."/>
            <person name="Wang L."/>
        </authorList>
    </citation>
    <scope>NUCLEOTIDE SEQUENCE [LARGE SCALE GENOMIC DNA]</scope>
    <source>
        <strain>K12 / MC4100 / BW2952</strain>
    </source>
</reference>
<name>FIXB_ECOBW</name>
<organism>
    <name type="scientific">Escherichia coli (strain K12 / MC4100 / BW2952)</name>
    <dbReference type="NCBI Taxonomy" id="595496"/>
    <lineage>
        <taxon>Bacteria</taxon>
        <taxon>Pseudomonadati</taxon>
        <taxon>Pseudomonadota</taxon>
        <taxon>Gammaproteobacteria</taxon>
        <taxon>Enterobacterales</taxon>
        <taxon>Enterobacteriaceae</taxon>
        <taxon>Escherichia</taxon>
    </lineage>
</organism>
<feature type="chain" id="PRO_1000213436" description="Protein FixB">
    <location>
        <begin position="1"/>
        <end position="313"/>
    </location>
</feature>
<feature type="binding site" evidence="1">
    <location>
        <begin position="255"/>
        <end position="283"/>
    </location>
    <ligand>
        <name>FAD</name>
        <dbReference type="ChEBI" id="CHEBI:57692"/>
    </ligand>
</feature>
<evidence type="ECO:0000255" key="1">
    <source>
        <dbReference type="HAMAP-Rule" id="MF_01056"/>
    </source>
</evidence>